<accession>Q9HS70</accession>
<proteinExistence type="inferred from homology"/>
<gene>
    <name evidence="1" type="primary">dtdA</name>
    <name type="ordered locus">VNG_0378C</name>
</gene>
<protein>
    <recommendedName>
        <fullName evidence="1">D-aminoacyl-tRNA deacylase</fullName>
        <ecNumber evidence="1">3.1.1.96</ecNumber>
    </recommendedName>
    <alternativeName>
        <fullName>D-tyrosyl-tRNA(Tyr) deacylase</fullName>
    </alternativeName>
</protein>
<keyword id="KW-0378">Hydrolase</keyword>
<keyword id="KW-0479">Metal-binding</keyword>
<keyword id="KW-1185">Reference proteome</keyword>
<keyword id="KW-0862">Zinc</keyword>
<name>DTDA_HALSA</name>
<dbReference type="EC" id="3.1.1.96" evidence="1"/>
<dbReference type="EMBL" id="AE004437">
    <property type="protein sequence ID" value="AAG18938.1"/>
    <property type="status" value="ALT_INIT"/>
    <property type="molecule type" value="Genomic_DNA"/>
</dbReference>
<dbReference type="PIR" id="F84196">
    <property type="entry name" value="F84196"/>
</dbReference>
<dbReference type="RefSeq" id="WP_049892484.1">
    <property type="nucleotide sequence ID" value="NC_002607.1"/>
</dbReference>
<dbReference type="SMR" id="Q9HS70"/>
<dbReference type="STRING" id="64091.VNG_0378C"/>
<dbReference type="PaxDb" id="64091-VNG_0378C"/>
<dbReference type="KEGG" id="hal:VNG_0378C"/>
<dbReference type="PATRIC" id="fig|64091.14.peg.281"/>
<dbReference type="HOGENOM" id="CLU_610619_0_0_2"/>
<dbReference type="InParanoid" id="Q9HS70"/>
<dbReference type="OrthoDB" id="9863at2157"/>
<dbReference type="Proteomes" id="UP000000554">
    <property type="component" value="Chromosome"/>
</dbReference>
<dbReference type="GO" id="GO:0051499">
    <property type="term" value="F:D-aminoacyl-tRNA deacylase activity"/>
    <property type="evidence" value="ECO:0000318"/>
    <property type="project" value="GO_Central"/>
</dbReference>
<dbReference type="GO" id="GO:0008270">
    <property type="term" value="F:zinc ion binding"/>
    <property type="evidence" value="ECO:0007669"/>
    <property type="project" value="UniProtKB-UniRule"/>
</dbReference>
<dbReference type="GO" id="GO:0019478">
    <property type="term" value="P:D-amino acid catabolic process"/>
    <property type="evidence" value="ECO:0007669"/>
    <property type="project" value="UniProtKB-UniRule"/>
</dbReference>
<dbReference type="Gene3D" id="3.40.50.10700">
    <property type="entry name" value="AF0625-like"/>
    <property type="match status" value="1"/>
</dbReference>
<dbReference type="Gene3D" id="3.40.630.50">
    <property type="entry name" value="AF0625-like"/>
    <property type="match status" value="1"/>
</dbReference>
<dbReference type="HAMAP" id="MF_00562">
    <property type="entry name" value="Deacylase_DtdA"/>
    <property type="match status" value="1"/>
</dbReference>
<dbReference type="InterPro" id="IPR018033">
    <property type="entry name" value="Deacylase_DtdA_archaea"/>
</dbReference>
<dbReference type="InterPro" id="IPR007508">
    <property type="entry name" value="DtdA"/>
</dbReference>
<dbReference type="PANTHER" id="PTHR34667">
    <property type="entry name" value="D-AMINOACYL-TRNA DEACYLASE"/>
    <property type="match status" value="1"/>
</dbReference>
<dbReference type="PANTHER" id="PTHR34667:SF1">
    <property type="entry name" value="D-AMINOACYL-TRNA DEACYLASE"/>
    <property type="match status" value="1"/>
</dbReference>
<dbReference type="Pfam" id="PF04414">
    <property type="entry name" value="tRNA_deacylase"/>
    <property type="match status" value="1"/>
</dbReference>
<dbReference type="SUPFAM" id="SSF142535">
    <property type="entry name" value="AF0625-like"/>
    <property type="match status" value="1"/>
</dbReference>
<sequence>MIGIVVSRADGASTHIWAQLREIEDFERIGPDAYRADGIEVRVFEELHTTIDDAADAFEAAVDMVVVVSRHSGDTGPLLSAHYTGNFGAAEYGGADRSVAPACPNAHHAVVDSLRSYAPPEYDVAMECTHHGPTSVGAPSMFVELGSSPAEWQDDAGARAVARAVRDLRGVPPHGDRAVVVFGGGHYTPRATRILADTDWPVGHVAADWSLTELGRPNAHRGVVDAMFTASGAAHALVEGDRPELTETIRDLGYTVVSETWVRETDGVPLSRVAALEESLTTVDDGLRFGEPAATHTGGYLVVELPDAVLDAAHAVDTAATVAAGRSHALAVTTVNAGRRLAGSAAFPDADAYEAFVDDVAAVLNAEYASVSRADGELTATREVFDPEAAAALGVPEGPAFGRLAGGEAIEHDGRTIAPAAVTSTETVRADVALHERPRERVRRPSDDEGKGN</sequence>
<reference key="1">
    <citation type="journal article" date="2000" name="Proc. Natl. Acad. Sci. U.S.A.">
        <title>Genome sequence of Halobacterium species NRC-1.</title>
        <authorList>
            <person name="Ng W.V."/>
            <person name="Kennedy S.P."/>
            <person name="Mahairas G.G."/>
            <person name="Berquist B."/>
            <person name="Pan M."/>
            <person name="Shukla H.D."/>
            <person name="Lasky S.R."/>
            <person name="Baliga N.S."/>
            <person name="Thorsson V."/>
            <person name="Sbrogna J."/>
            <person name="Swartzell S."/>
            <person name="Weir D."/>
            <person name="Hall J."/>
            <person name="Dahl T.A."/>
            <person name="Welti R."/>
            <person name="Goo Y.A."/>
            <person name="Leithauser B."/>
            <person name="Keller K."/>
            <person name="Cruz R."/>
            <person name="Danson M.J."/>
            <person name="Hough D.W."/>
            <person name="Maddocks D.G."/>
            <person name="Jablonski P.E."/>
            <person name="Krebs M.P."/>
            <person name="Angevine C.M."/>
            <person name="Dale H."/>
            <person name="Isenbarger T.A."/>
            <person name="Peck R.F."/>
            <person name="Pohlschroder M."/>
            <person name="Spudich J.L."/>
            <person name="Jung K.-H."/>
            <person name="Alam M."/>
            <person name="Freitas T."/>
            <person name="Hou S."/>
            <person name="Daniels C.J."/>
            <person name="Dennis P.P."/>
            <person name="Omer A.D."/>
            <person name="Ebhardt H."/>
            <person name="Lowe T.M."/>
            <person name="Liang P."/>
            <person name="Riley M."/>
            <person name="Hood L."/>
            <person name="DasSarma S."/>
        </authorList>
    </citation>
    <scope>NUCLEOTIDE SEQUENCE [LARGE SCALE GENOMIC DNA]</scope>
    <source>
        <strain>ATCC 700922 / JCM 11081 / NRC-1</strain>
    </source>
</reference>
<feature type="chain" id="PRO_0000158978" description="D-aminoacyl-tRNA deacylase">
    <location>
        <begin position="1"/>
        <end position="453"/>
    </location>
</feature>
<feature type="region of interest" description="Disordered" evidence="2">
    <location>
        <begin position="428"/>
        <end position="453"/>
    </location>
</feature>
<organism>
    <name type="scientific">Halobacterium salinarum (strain ATCC 700922 / JCM 11081 / NRC-1)</name>
    <name type="common">Halobacterium halobium</name>
    <dbReference type="NCBI Taxonomy" id="64091"/>
    <lineage>
        <taxon>Archaea</taxon>
        <taxon>Methanobacteriati</taxon>
        <taxon>Methanobacteriota</taxon>
        <taxon>Stenosarchaea group</taxon>
        <taxon>Halobacteria</taxon>
        <taxon>Halobacteriales</taxon>
        <taxon>Halobacteriaceae</taxon>
        <taxon>Halobacterium</taxon>
        <taxon>Halobacterium salinarum NRC-34001</taxon>
    </lineage>
</organism>
<comment type="function">
    <text evidence="1">D-aminoacyl-tRNA deacylase with broad substrate specificity. By recycling D-aminoacyl-tRNA to D-amino acids and free tRNA molecules, this enzyme counteracts the toxicity associated with the formation of D-aminoacyl-tRNA entities in vivo.</text>
</comment>
<comment type="catalytic activity">
    <reaction evidence="1">
        <text>a D-aminoacyl-tRNA + H2O = a tRNA + a D-alpha-amino acid + H(+)</text>
        <dbReference type="Rhea" id="RHEA:13953"/>
        <dbReference type="Rhea" id="RHEA-COMP:10123"/>
        <dbReference type="Rhea" id="RHEA-COMP:10124"/>
        <dbReference type="ChEBI" id="CHEBI:15377"/>
        <dbReference type="ChEBI" id="CHEBI:15378"/>
        <dbReference type="ChEBI" id="CHEBI:59871"/>
        <dbReference type="ChEBI" id="CHEBI:78442"/>
        <dbReference type="ChEBI" id="CHEBI:79333"/>
        <dbReference type="EC" id="3.1.1.96"/>
    </reaction>
</comment>
<comment type="catalytic activity">
    <reaction evidence="1">
        <text>glycyl-tRNA(Ala) + H2O = tRNA(Ala) + glycine + H(+)</text>
        <dbReference type="Rhea" id="RHEA:53744"/>
        <dbReference type="Rhea" id="RHEA-COMP:9657"/>
        <dbReference type="Rhea" id="RHEA-COMP:13640"/>
        <dbReference type="ChEBI" id="CHEBI:15377"/>
        <dbReference type="ChEBI" id="CHEBI:15378"/>
        <dbReference type="ChEBI" id="CHEBI:57305"/>
        <dbReference type="ChEBI" id="CHEBI:78442"/>
        <dbReference type="ChEBI" id="CHEBI:78522"/>
        <dbReference type="EC" id="3.1.1.96"/>
    </reaction>
</comment>
<comment type="cofactor">
    <cofactor evidence="1">
        <name>Zn(2+)</name>
        <dbReference type="ChEBI" id="CHEBI:29105"/>
    </cofactor>
    <text evidence="1">Binds 2 Zn(2+) ions per subunit.</text>
</comment>
<comment type="subunit">
    <text evidence="1">Monomer.</text>
</comment>
<comment type="similarity">
    <text evidence="1">Belongs to the DtdA deacylase family.</text>
</comment>
<comment type="sequence caution" evidence="3">
    <conflict type="erroneous initiation">
        <sequence resource="EMBL-CDS" id="AAG18938"/>
    </conflict>
    <text>Truncated N-terminus.</text>
</comment>
<evidence type="ECO:0000255" key="1">
    <source>
        <dbReference type="HAMAP-Rule" id="MF_00562"/>
    </source>
</evidence>
<evidence type="ECO:0000256" key="2">
    <source>
        <dbReference type="SAM" id="MobiDB-lite"/>
    </source>
</evidence>
<evidence type="ECO:0000305" key="3"/>